<keyword id="KW-0028">Amino-acid biosynthesis</keyword>
<keyword id="KW-0057">Aromatic amino acid biosynthesis</keyword>
<keyword id="KW-0413">Isomerase</keyword>
<keyword id="KW-0822">Tryptophan biosynthesis</keyword>
<dbReference type="EC" id="5.3.1.24" evidence="1"/>
<dbReference type="EMBL" id="CP001011">
    <property type="protein sequence ID" value="ACB92085.1"/>
    <property type="molecule type" value="Genomic_DNA"/>
</dbReference>
<dbReference type="RefSeq" id="WP_004090663.1">
    <property type="nucleotide sequence ID" value="NC_010577.1"/>
</dbReference>
<dbReference type="SMR" id="B2I9J1"/>
<dbReference type="KEGG" id="xfn:XfasM23_0643"/>
<dbReference type="HOGENOM" id="CLU_076364_2_0_6"/>
<dbReference type="UniPathway" id="UPA00035">
    <property type="reaction ID" value="UER00042"/>
</dbReference>
<dbReference type="Proteomes" id="UP000001698">
    <property type="component" value="Chromosome"/>
</dbReference>
<dbReference type="GO" id="GO:0004640">
    <property type="term" value="F:phosphoribosylanthranilate isomerase activity"/>
    <property type="evidence" value="ECO:0007669"/>
    <property type="project" value="UniProtKB-UniRule"/>
</dbReference>
<dbReference type="GO" id="GO:0000162">
    <property type="term" value="P:L-tryptophan biosynthetic process"/>
    <property type="evidence" value="ECO:0007669"/>
    <property type="project" value="UniProtKB-UniRule"/>
</dbReference>
<dbReference type="CDD" id="cd00405">
    <property type="entry name" value="PRAI"/>
    <property type="match status" value="1"/>
</dbReference>
<dbReference type="Gene3D" id="3.20.20.70">
    <property type="entry name" value="Aldolase class I"/>
    <property type="match status" value="1"/>
</dbReference>
<dbReference type="HAMAP" id="MF_00135">
    <property type="entry name" value="PRAI"/>
    <property type="match status" value="1"/>
</dbReference>
<dbReference type="InterPro" id="IPR013785">
    <property type="entry name" value="Aldolase_TIM"/>
</dbReference>
<dbReference type="InterPro" id="IPR001240">
    <property type="entry name" value="PRAI_dom"/>
</dbReference>
<dbReference type="InterPro" id="IPR011060">
    <property type="entry name" value="RibuloseP-bd_barrel"/>
</dbReference>
<dbReference type="InterPro" id="IPR044643">
    <property type="entry name" value="TrpF_fam"/>
</dbReference>
<dbReference type="NCBIfam" id="NF002296">
    <property type="entry name" value="PRK01222.1-2"/>
    <property type="match status" value="1"/>
</dbReference>
<dbReference type="PANTHER" id="PTHR42894">
    <property type="entry name" value="N-(5'-PHOSPHORIBOSYL)ANTHRANILATE ISOMERASE"/>
    <property type="match status" value="1"/>
</dbReference>
<dbReference type="PANTHER" id="PTHR42894:SF1">
    <property type="entry name" value="N-(5'-PHOSPHORIBOSYL)ANTHRANILATE ISOMERASE"/>
    <property type="match status" value="1"/>
</dbReference>
<dbReference type="Pfam" id="PF00697">
    <property type="entry name" value="PRAI"/>
    <property type="match status" value="1"/>
</dbReference>
<dbReference type="SUPFAM" id="SSF51366">
    <property type="entry name" value="Ribulose-phoshate binding barrel"/>
    <property type="match status" value="1"/>
</dbReference>
<protein>
    <recommendedName>
        <fullName evidence="1">N-(5'-phosphoribosyl)anthranilate isomerase</fullName>
        <shortName evidence="1">PRAI</shortName>
        <ecNumber evidence="1">5.3.1.24</ecNumber>
    </recommendedName>
</protein>
<evidence type="ECO:0000255" key="1">
    <source>
        <dbReference type="HAMAP-Rule" id="MF_00135"/>
    </source>
</evidence>
<gene>
    <name evidence="1" type="primary">trpF</name>
    <name type="ordered locus">XfasM23_0643</name>
</gene>
<feature type="chain" id="PRO_1000095952" description="N-(5'-phosphoribosyl)anthranilate isomerase">
    <location>
        <begin position="1"/>
        <end position="220"/>
    </location>
</feature>
<name>TRPF_XYLF2</name>
<organism>
    <name type="scientific">Xylella fastidiosa (strain M23)</name>
    <dbReference type="NCBI Taxonomy" id="405441"/>
    <lineage>
        <taxon>Bacteria</taxon>
        <taxon>Pseudomonadati</taxon>
        <taxon>Pseudomonadota</taxon>
        <taxon>Gammaproteobacteria</taxon>
        <taxon>Lysobacterales</taxon>
        <taxon>Lysobacteraceae</taxon>
        <taxon>Xylella</taxon>
    </lineage>
</organism>
<proteinExistence type="inferred from homology"/>
<reference key="1">
    <citation type="journal article" date="2010" name="J. Bacteriol.">
        <title>Whole genome sequences of two Xylella fastidiosa strains (M12 and M23) causing almond leaf scorch disease in California.</title>
        <authorList>
            <person name="Chen J."/>
            <person name="Xie G."/>
            <person name="Han S."/>
            <person name="Chertkov O."/>
            <person name="Sims D."/>
            <person name="Civerolo E.L."/>
        </authorList>
    </citation>
    <scope>NUCLEOTIDE SEQUENCE [LARGE SCALE GENOMIC DNA]</scope>
    <source>
        <strain>M23</strain>
    </source>
</reference>
<sequence>MNIPPYRTRIKFCGMTRVGDVRLASELGVDAVGLIFASGSSRLLTVSAACAIRRTVAPMVDVVALFQNNSADEIHTVVRTVRPTLLQFHGKEEDAFCRTFNVPYLKAIPMAGAEAKRICTRTLYLKYPNAAGFIFDSHLKGGTGQTFDWSRLPIDLHHPFLLAGGITPENVFDAIAATVPWGVDVSSGIELQPGIKDGDKMRQFVEEVRRADGRRLLGVP</sequence>
<accession>B2I9J1</accession>
<comment type="catalytic activity">
    <reaction evidence="1">
        <text>N-(5-phospho-beta-D-ribosyl)anthranilate = 1-(2-carboxyphenylamino)-1-deoxy-D-ribulose 5-phosphate</text>
        <dbReference type="Rhea" id="RHEA:21540"/>
        <dbReference type="ChEBI" id="CHEBI:18277"/>
        <dbReference type="ChEBI" id="CHEBI:58613"/>
        <dbReference type="EC" id="5.3.1.24"/>
    </reaction>
</comment>
<comment type="pathway">
    <text evidence="1">Amino-acid biosynthesis; L-tryptophan biosynthesis; L-tryptophan from chorismate: step 3/5.</text>
</comment>
<comment type="similarity">
    <text evidence="1">Belongs to the TrpF family.</text>
</comment>